<evidence type="ECO:0000250" key="1"/>
<evidence type="ECO:0000255" key="2">
    <source>
        <dbReference type="PROSITE-ProRule" id="PRU00691"/>
    </source>
</evidence>
<evidence type="ECO:0000305" key="3"/>
<sequence length="126" mass="14754">MIRNISKSIVNLNSQKIATNTSFKELVLESKKPVIVDIRPCYYTPTKFLNKELFEAIKEKNDTFELVTIDFDEEYELAKLLKIQSFPTIIGFSNGNFLKKHTGPFRSKSHILEFLNHIETEHKKKY</sequence>
<comment type="subcellular location">
    <subcellularLocation>
        <location evidence="1">Mitochondrion</location>
    </subcellularLocation>
</comment>
<comment type="similarity">
    <text evidence="3">Belongs to the thioredoxin family.</text>
</comment>
<gene>
    <name type="ORF">DDB_G0284941</name>
</gene>
<protein>
    <recommendedName>
        <fullName>Thioredoxin domain-containing protein, mitochondrial</fullName>
    </recommendedName>
</protein>
<proteinExistence type="inferred from homology"/>
<dbReference type="EMBL" id="AAFI02000073">
    <property type="protein sequence ID" value="EAL64934.1"/>
    <property type="molecule type" value="Genomic_DNA"/>
</dbReference>
<dbReference type="RefSeq" id="XP_639945.1">
    <property type="nucleotide sequence ID" value="XM_634853.1"/>
</dbReference>
<dbReference type="SMR" id="Q54NX2"/>
<dbReference type="STRING" id="44689.Q54NX2"/>
<dbReference type="PaxDb" id="44689-DDB0238417"/>
<dbReference type="EnsemblProtists" id="EAL64934">
    <property type="protein sequence ID" value="EAL64934"/>
    <property type="gene ID" value="DDB_G0284941"/>
</dbReference>
<dbReference type="GeneID" id="8624857"/>
<dbReference type="KEGG" id="ddi:DDB_G0284941"/>
<dbReference type="dictyBase" id="DDB_G0284941"/>
<dbReference type="VEuPathDB" id="AmoebaDB:DDB_G0284941"/>
<dbReference type="eggNOG" id="KOG0910">
    <property type="taxonomic scope" value="Eukaryota"/>
</dbReference>
<dbReference type="HOGENOM" id="CLU_1985751_0_0_1"/>
<dbReference type="InParanoid" id="Q54NX2"/>
<dbReference type="OMA" id="NHIETEH"/>
<dbReference type="PhylomeDB" id="Q54NX2"/>
<dbReference type="PRO" id="PR:Q54NX2"/>
<dbReference type="Proteomes" id="UP000002195">
    <property type="component" value="Chromosome 4"/>
</dbReference>
<dbReference type="GO" id="GO:0005737">
    <property type="term" value="C:cytoplasm"/>
    <property type="evidence" value="ECO:0000318"/>
    <property type="project" value="GO_Central"/>
</dbReference>
<dbReference type="GO" id="GO:0005739">
    <property type="term" value="C:mitochondrion"/>
    <property type="evidence" value="ECO:0007669"/>
    <property type="project" value="UniProtKB-SubCell"/>
</dbReference>
<dbReference type="GO" id="GO:0015035">
    <property type="term" value="F:protein-disulfide reductase activity"/>
    <property type="evidence" value="ECO:0000318"/>
    <property type="project" value="GO_Central"/>
</dbReference>
<dbReference type="CDD" id="cd02947">
    <property type="entry name" value="TRX_family"/>
    <property type="match status" value="1"/>
</dbReference>
<dbReference type="Gene3D" id="3.40.30.10">
    <property type="entry name" value="Glutaredoxin"/>
    <property type="match status" value="1"/>
</dbReference>
<dbReference type="InterPro" id="IPR036249">
    <property type="entry name" value="Thioredoxin-like_sf"/>
</dbReference>
<dbReference type="InterPro" id="IPR013766">
    <property type="entry name" value="Thioredoxin_domain"/>
</dbReference>
<dbReference type="PANTHER" id="PTHR45663">
    <property type="entry name" value="GEO12009P1"/>
    <property type="match status" value="1"/>
</dbReference>
<dbReference type="PANTHER" id="PTHR45663:SF11">
    <property type="entry name" value="GEO12009P1"/>
    <property type="match status" value="1"/>
</dbReference>
<dbReference type="Pfam" id="PF00085">
    <property type="entry name" value="Thioredoxin"/>
    <property type="match status" value="1"/>
</dbReference>
<dbReference type="SUPFAM" id="SSF52833">
    <property type="entry name" value="Thioredoxin-like"/>
    <property type="match status" value="1"/>
</dbReference>
<dbReference type="PROSITE" id="PS51352">
    <property type="entry name" value="THIOREDOXIN_2"/>
    <property type="match status" value="1"/>
</dbReference>
<feature type="transit peptide" description="Mitochondrion" evidence="1">
    <location>
        <begin position="1"/>
        <end status="unknown"/>
    </location>
</feature>
<feature type="chain" id="PRO_0000328595" description="Thioredoxin domain-containing protein, mitochondrial">
    <location>
        <begin status="unknown"/>
        <end position="126"/>
    </location>
</feature>
<feature type="domain" description="Thioredoxin" evidence="2">
    <location>
        <begin position="14"/>
        <end position="120"/>
    </location>
</feature>
<accession>Q54NX2</accession>
<reference key="1">
    <citation type="journal article" date="2005" name="Nature">
        <title>The genome of the social amoeba Dictyostelium discoideum.</title>
        <authorList>
            <person name="Eichinger L."/>
            <person name="Pachebat J.A."/>
            <person name="Gloeckner G."/>
            <person name="Rajandream M.A."/>
            <person name="Sucgang R."/>
            <person name="Berriman M."/>
            <person name="Song J."/>
            <person name="Olsen R."/>
            <person name="Szafranski K."/>
            <person name="Xu Q."/>
            <person name="Tunggal B."/>
            <person name="Kummerfeld S."/>
            <person name="Madera M."/>
            <person name="Konfortov B.A."/>
            <person name="Rivero F."/>
            <person name="Bankier A.T."/>
            <person name="Lehmann R."/>
            <person name="Hamlin N."/>
            <person name="Davies R."/>
            <person name="Gaudet P."/>
            <person name="Fey P."/>
            <person name="Pilcher K."/>
            <person name="Chen G."/>
            <person name="Saunders D."/>
            <person name="Sodergren E.J."/>
            <person name="Davis P."/>
            <person name="Kerhornou A."/>
            <person name="Nie X."/>
            <person name="Hall N."/>
            <person name="Anjard C."/>
            <person name="Hemphill L."/>
            <person name="Bason N."/>
            <person name="Farbrother P."/>
            <person name="Desany B."/>
            <person name="Just E."/>
            <person name="Morio T."/>
            <person name="Rost R."/>
            <person name="Churcher C.M."/>
            <person name="Cooper J."/>
            <person name="Haydock S."/>
            <person name="van Driessche N."/>
            <person name="Cronin A."/>
            <person name="Goodhead I."/>
            <person name="Muzny D.M."/>
            <person name="Mourier T."/>
            <person name="Pain A."/>
            <person name="Lu M."/>
            <person name="Harper D."/>
            <person name="Lindsay R."/>
            <person name="Hauser H."/>
            <person name="James K.D."/>
            <person name="Quiles M."/>
            <person name="Madan Babu M."/>
            <person name="Saito T."/>
            <person name="Buchrieser C."/>
            <person name="Wardroper A."/>
            <person name="Felder M."/>
            <person name="Thangavelu M."/>
            <person name="Johnson D."/>
            <person name="Knights A."/>
            <person name="Loulseged H."/>
            <person name="Mungall K.L."/>
            <person name="Oliver K."/>
            <person name="Price C."/>
            <person name="Quail M.A."/>
            <person name="Urushihara H."/>
            <person name="Hernandez J."/>
            <person name="Rabbinowitsch E."/>
            <person name="Steffen D."/>
            <person name="Sanders M."/>
            <person name="Ma J."/>
            <person name="Kohara Y."/>
            <person name="Sharp S."/>
            <person name="Simmonds M.N."/>
            <person name="Spiegler S."/>
            <person name="Tivey A."/>
            <person name="Sugano S."/>
            <person name="White B."/>
            <person name="Walker D."/>
            <person name="Woodward J.R."/>
            <person name="Winckler T."/>
            <person name="Tanaka Y."/>
            <person name="Shaulsky G."/>
            <person name="Schleicher M."/>
            <person name="Weinstock G.M."/>
            <person name="Rosenthal A."/>
            <person name="Cox E.C."/>
            <person name="Chisholm R.L."/>
            <person name="Gibbs R.A."/>
            <person name="Loomis W.F."/>
            <person name="Platzer M."/>
            <person name="Kay R.R."/>
            <person name="Williams J.G."/>
            <person name="Dear P.H."/>
            <person name="Noegel A.A."/>
            <person name="Barrell B.G."/>
            <person name="Kuspa A."/>
        </authorList>
    </citation>
    <scope>NUCLEOTIDE SEQUENCE [LARGE SCALE GENOMIC DNA]</scope>
    <source>
        <strain>AX4</strain>
    </source>
</reference>
<organism>
    <name type="scientific">Dictyostelium discoideum</name>
    <name type="common">Social amoeba</name>
    <dbReference type="NCBI Taxonomy" id="44689"/>
    <lineage>
        <taxon>Eukaryota</taxon>
        <taxon>Amoebozoa</taxon>
        <taxon>Evosea</taxon>
        <taxon>Eumycetozoa</taxon>
        <taxon>Dictyostelia</taxon>
        <taxon>Dictyosteliales</taxon>
        <taxon>Dictyosteliaceae</taxon>
        <taxon>Dictyostelium</taxon>
    </lineage>
</organism>
<keyword id="KW-0496">Mitochondrion</keyword>
<keyword id="KW-1185">Reference proteome</keyword>
<keyword id="KW-0809">Transit peptide</keyword>
<name>THIOD_DICDI</name>